<keyword id="KW-0963">Cytoplasm</keyword>
<keyword id="KW-0539">Nucleus</keyword>
<keyword id="KW-0653">Protein transport</keyword>
<keyword id="KW-1185">Reference proteome</keyword>
<keyword id="KW-0677">Repeat</keyword>
<keyword id="KW-0811">Translocation</keyword>
<keyword id="KW-0813">Transport</keyword>
<reference key="1">
    <citation type="journal article" date="2005" name="Nature">
        <title>The genome of the social amoeba Dictyostelium discoideum.</title>
        <authorList>
            <person name="Eichinger L."/>
            <person name="Pachebat J.A."/>
            <person name="Gloeckner G."/>
            <person name="Rajandream M.A."/>
            <person name="Sucgang R."/>
            <person name="Berriman M."/>
            <person name="Song J."/>
            <person name="Olsen R."/>
            <person name="Szafranski K."/>
            <person name="Xu Q."/>
            <person name="Tunggal B."/>
            <person name="Kummerfeld S."/>
            <person name="Madera M."/>
            <person name="Konfortov B.A."/>
            <person name="Rivero F."/>
            <person name="Bankier A.T."/>
            <person name="Lehmann R."/>
            <person name="Hamlin N."/>
            <person name="Davies R."/>
            <person name="Gaudet P."/>
            <person name="Fey P."/>
            <person name="Pilcher K."/>
            <person name="Chen G."/>
            <person name="Saunders D."/>
            <person name="Sodergren E.J."/>
            <person name="Davis P."/>
            <person name="Kerhornou A."/>
            <person name="Nie X."/>
            <person name="Hall N."/>
            <person name="Anjard C."/>
            <person name="Hemphill L."/>
            <person name="Bason N."/>
            <person name="Farbrother P."/>
            <person name="Desany B."/>
            <person name="Just E."/>
            <person name="Morio T."/>
            <person name="Rost R."/>
            <person name="Churcher C.M."/>
            <person name="Cooper J."/>
            <person name="Haydock S."/>
            <person name="van Driessche N."/>
            <person name="Cronin A."/>
            <person name="Goodhead I."/>
            <person name="Muzny D.M."/>
            <person name="Mourier T."/>
            <person name="Pain A."/>
            <person name="Lu M."/>
            <person name="Harper D."/>
            <person name="Lindsay R."/>
            <person name="Hauser H."/>
            <person name="James K.D."/>
            <person name="Quiles M."/>
            <person name="Madan Babu M."/>
            <person name="Saito T."/>
            <person name="Buchrieser C."/>
            <person name="Wardroper A."/>
            <person name="Felder M."/>
            <person name="Thangavelu M."/>
            <person name="Johnson D."/>
            <person name="Knights A."/>
            <person name="Loulseged H."/>
            <person name="Mungall K.L."/>
            <person name="Oliver K."/>
            <person name="Price C."/>
            <person name="Quail M.A."/>
            <person name="Urushihara H."/>
            <person name="Hernandez J."/>
            <person name="Rabbinowitsch E."/>
            <person name="Steffen D."/>
            <person name="Sanders M."/>
            <person name="Ma J."/>
            <person name="Kohara Y."/>
            <person name="Sharp S."/>
            <person name="Simmonds M.N."/>
            <person name="Spiegler S."/>
            <person name="Tivey A."/>
            <person name="Sugano S."/>
            <person name="White B."/>
            <person name="Walker D."/>
            <person name="Woodward J.R."/>
            <person name="Winckler T."/>
            <person name="Tanaka Y."/>
            <person name="Shaulsky G."/>
            <person name="Schleicher M."/>
            <person name="Weinstock G.M."/>
            <person name="Rosenthal A."/>
            <person name="Cox E.C."/>
            <person name="Chisholm R.L."/>
            <person name="Gibbs R.A."/>
            <person name="Loomis W.F."/>
            <person name="Platzer M."/>
            <person name="Kay R.R."/>
            <person name="Williams J.G."/>
            <person name="Dear P.H."/>
            <person name="Noegel A.A."/>
            <person name="Barrell B.G."/>
            <person name="Kuspa A."/>
        </authorList>
    </citation>
    <scope>NUCLEOTIDE SEQUENCE [LARGE SCALE GENOMIC DNA]</scope>
    <source>
        <strain>AX4</strain>
    </source>
</reference>
<proteinExistence type="inferred from homology"/>
<name>XPO1_DICDI</name>
<organism>
    <name type="scientific">Dictyostelium discoideum</name>
    <name type="common">Social amoeba</name>
    <dbReference type="NCBI Taxonomy" id="44689"/>
    <lineage>
        <taxon>Eukaryota</taxon>
        <taxon>Amoebozoa</taxon>
        <taxon>Evosea</taxon>
        <taxon>Eumycetozoa</taxon>
        <taxon>Dictyostelia</taxon>
        <taxon>Dictyosteliales</taxon>
        <taxon>Dictyosteliaceae</taxon>
        <taxon>Dictyostelium</taxon>
    </lineage>
</organism>
<gene>
    <name type="primary">xpo1</name>
    <name type="synonym">crm1</name>
    <name type="ORF">DDB_G0291306</name>
</gene>
<comment type="function">
    <text>Mediates the nuclear export of cellular proteins (cargos) bearing a leucine-rich nuclear export signal (NES).</text>
</comment>
<comment type="subunit">
    <text evidence="1">Component of a nuclear export receptor complex.</text>
</comment>
<comment type="subcellular location">
    <subcellularLocation>
        <location evidence="1">Nucleus</location>
    </subcellularLocation>
    <subcellularLocation>
        <location evidence="1">Cytoplasm</location>
        <location evidence="1">Perinuclear region</location>
    </subcellularLocation>
    <text evidence="1">Shuttles between the nucleus and the cytoplasm.</text>
</comment>
<comment type="similarity">
    <text evidence="3">Belongs to the exportin family.</text>
</comment>
<sequence length="1057" mass="122014">MENILNFNEPLDINLLDQIVSVLYNPLSNKNDIKAAQMVLGKFQEHPDAWSKVDTILETSKIVQTKFIALVIMDSLIKYRWKSLPREQCEGIKNYIVSLIIRLSSDPQTSSREKLLVNKLNLVFVQILKQEWTTNWSTFIPEIISSSKTNESLCENNMVILRLLSEEIFNFSEEQMTQTKIQTLKITFEKEFSLINDLCFYILENATRASLIKATLETLQRFLNWVPLHYIIEVNGGIAEPSKLVKLLLHKYFPEPLFRNSTLKCLTEIGNLNLGNQQYDAVFIAIIDKFMNQIKFIKPDPSKIPQDYEDGDQGERSFIHTVSLFLTGFFKSHLKIMENSLNIPYLTLAHEILVNISNIDELELFKICLEYWNFLSSNLYSDIATFTTTLLSTPPRLQLYKSVLSKVRVVLIDHMAKPEEVIVVEDENGNIVRETTKDTDSLTLYESMRETLIFLTHLDSENTQHIMLEKLQTLISGREFTFQRLNTLCWAIGSISGAQNKEQEKRFLVTVIKDLLELCQNKKGKDNKAVIASDIMYIVGQYPRFLKDHWKFLKTVVNKLFEFMHESHPGVQDMACDTFLKISKQCKRKFVVLQVEESQPFINELLNQLSTTIAHLEQSQIHTFYEAVGYMIASSSDAAFREKLVNKFMELPNHSWLQIMGAASVKVESLLTVEVARDILNLIKTNNRAAMSLENCYITQISKIYLDLLNVYRTYSDHISRNPNIYRETLGQAMRSVKKETLKLLETFIEKSSDKQVIYSNFLQPLLEAVLGDYRTNIPETRDPEVLSLMTAIITSLKQLVHPEVPKILEAVFETTLSMITKNFEDYPYHRINFFNLIRAINSNAFTVFHNLHPQQFKLLIDCVVWAFKHTERNISETGLHILKELIENVSKNSDVANVFFKTYLVSLLNDILYILTDSFHKSGFALECDILRMMFQVVENGVVKIPLFDPQQANFPSNSEYVKEIVVTFLSASPNVSRPQIQAFVTRLFNLANINNNDFKSATRDFLITLKEWKSHENADLYSDEKNIEKALALKKQSMIPGMVRPNDVNLEMNDL</sequence>
<accession>Q54EV7</accession>
<feature type="chain" id="PRO_0000328479" description="Exportin-1">
    <location>
        <begin position="1"/>
        <end position="1057"/>
    </location>
</feature>
<feature type="domain" description="Importin N-terminal" evidence="2">
    <location>
        <begin position="36"/>
        <end position="102"/>
    </location>
</feature>
<feature type="repeat" description="HEAT 1">
    <location>
        <begin position="239"/>
        <end position="275"/>
    </location>
</feature>
<feature type="repeat" description="HEAT 2">
    <location>
        <begin position="281"/>
        <end position="321"/>
    </location>
</feature>
<feature type="repeat" description="HEAT 3">
    <location>
        <begin position="462"/>
        <end position="501"/>
    </location>
</feature>
<feature type="repeat" description="HEAT 4">
    <location>
        <begin position="506"/>
        <end position="544"/>
    </location>
</feature>
<feature type="repeat" description="HEAT 5">
    <location>
        <begin position="551"/>
        <end position="588"/>
    </location>
</feature>
<feature type="repeat" description="HEAT 6">
    <location>
        <begin position="596"/>
        <end position="633"/>
    </location>
</feature>
<feature type="repeat" description="HEAT 7">
    <location>
        <begin position="739"/>
        <end position="776"/>
    </location>
</feature>
<feature type="repeat" description="HEAT 8">
    <location>
        <begin position="781"/>
        <end position="818"/>
    </location>
</feature>
<feature type="repeat" description="HEAT 9">
    <location>
        <begin position="855"/>
        <end position="892"/>
    </location>
</feature>
<feature type="repeat" description="HEAT 10">
    <location>
        <begin position="902"/>
        <end position="925"/>
    </location>
</feature>
<feature type="repeat" description="HEAT 11">
    <location>
        <begin position="926"/>
        <end position="965"/>
    </location>
</feature>
<protein>
    <recommendedName>
        <fullName>Exportin-1</fullName>
        <shortName>Exp1</shortName>
    </recommendedName>
</protein>
<dbReference type="EMBL" id="AAFI02000177">
    <property type="protein sequence ID" value="EAL61637.2"/>
    <property type="molecule type" value="Genomic_DNA"/>
</dbReference>
<dbReference type="RefSeq" id="XP_635133.2">
    <property type="nucleotide sequence ID" value="XM_630041.2"/>
</dbReference>
<dbReference type="SMR" id="Q54EV7"/>
<dbReference type="FunCoup" id="Q54EV7">
    <property type="interactions" value="1567"/>
</dbReference>
<dbReference type="STRING" id="44689.Q54EV7"/>
<dbReference type="PaxDb" id="44689-DDB0234066"/>
<dbReference type="EnsemblProtists" id="EAL61637">
    <property type="protein sequence ID" value="EAL61637"/>
    <property type="gene ID" value="DDB_G0291306"/>
</dbReference>
<dbReference type="GeneID" id="8628079"/>
<dbReference type="KEGG" id="ddi:DDB_G0291306"/>
<dbReference type="dictyBase" id="DDB_G0291306">
    <property type="gene designation" value="xpo1"/>
</dbReference>
<dbReference type="VEuPathDB" id="AmoebaDB:DDB_G0291306"/>
<dbReference type="eggNOG" id="KOG2020">
    <property type="taxonomic scope" value="Eukaryota"/>
</dbReference>
<dbReference type="HOGENOM" id="CLU_011906_0_0_1"/>
<dbReference type="InParanoid" id="Q54EV7"/>
<dbReference type="OMA" id="WAFKHNN"/>
<dbReference type="PhylomeDB" id="Q54EV7"/>
<dbReference type="Reactome" id="R-DDI-5687128">
    <property type="pathway name" value="MAPK6/MAPK4 signaling"/>
</dbReference>
<dbReference type="PRO" id="PR:Q54EV7"/>
<dbReference type="Proteomes" id="UP000002195">
    <property type="component" value="Chromosome 6"/>
</dbReference>
<dbReference type="GO" id="GO:0005737">
    <property type="term" value="C:cytoplasm"/>
    <property type="evidence" value="ECO:0000318"/>
    <property type="project" value="GO_Central"/>
</dbReference>
<dbReference type="GO" id="GO:0005634">
    <property type="term" value="C:nucleus"/>
    <property type="evidence" value="ECO:0000250"/>
    <property type="project" value="dictyBase"/>
</dbReference>
<dbReference type="GO" id="GO:0048471">
    <property type="term" value="C:perinuclear region of cytoplasm"/>
    <property type="evidence" value="ECO:0007669"/>
    <property type="project" value="UniProtKB-SubCell"/>
</dbReference>
<dbReference type="GO" id="GO:0005049">
    <property type="term" value="F:nuclear export signal receptor activity"/>
    <property type="evidence" value="ECO:0000318"/>
    <property type="project" value="GO_Central"/>
</dbReference>
<dbReference type="GO" id="GO:0031267">
    <property type="term" value="F:small GTPase binding"/>
    <property type="evidence" value="ECO:0007669"/>
    <property type="project" value="InterPro"/>
</dbReference>
<dbReference type="GO" id="GO:0006611">
    <property type="term" value="P:protein export from nucleus"/>
    <property type="evidence" value="ECO:0000250"/>
    <property type="project" value="dictyBase"/>
</dbReference>
<dbReference type="GO" id="GO:0000055">
    <property type="term" value="P:ribosomal large subunit export from nucleus"/>
    <property type="evidence" value="ECO:0000318"/>
    <property type="project" value="GO_Central"/>
</dbReference>
<dbReference type="GO" id="GO:0000056">
    <property type="term" value="P:ribosomal small subunit export from nucleus"/>
    <property type="evidence" value="ECO:0000318"/>
    <property type="project" value="GO_Central"/>
</dbReference>
<dbReference type="FunFam" id="1.25.10.10:FF:000610">
    <property type="entry name" value="Exportin 1"/>
    <property type="match status" value="1"/>
</dbReference>
<dbReference type="Gene3D" id="1.25.10.10">
    <property type="entry name" value="Leucine-rich Repeat Variant"/>
    <property type="match status" value="1"/>
</dbReference>
<dbReference type="InterPro" id="IPR011989">
    <property type="entry name" value="ARM-like"/>
</dbReference>
<dbReference type="InterPro" id="IPR016024">
    <property type="entry name" value="ARM-type_fold"/>
</dbReference>
<dbReference type="InterPro" id="IPR041123">
    <property type="entry name" value="CRM1_repeat"/>
</dbReference>
<dbReference type="InterPro" id="IPR041235">
    <property type="entry name" value="Exp1_repeat_2"/>
</dbReference>
<dbReference type="InterPro" id="IPR013598">
    <property type="entry name" value="Exportin-1/Importin-b-like"/>
</dbReference>
<dbReference type="InterPro" id="IPR001494">
    <property type="entry name" value="Importin-beta_N"/>
</dbReference>
<dbReference type="InterPro" id="IPR045065">
    <property type="entry name" value="XPO1/5"/>
</dbReference>
<dbReference type="InterPro" id="IPR014877">
    <property type="entry name" value="XPO1_C_dom"/>
</dbReference>
<dbReference type="InterPro" id="IPR040485">
    <property type="entry name" value="XPO1_repeat_3"/>
</dbReference>
<dbReference type="PANTHER" id="PTHR11223">
    <property type="entry name" value="EXPORTIN 1/5"/>
    <property type="match status" value="1"/>
</dbReference>
<dbReference type="PANTHER" id="PTHR11223:SF2">
    <property type="entry name" value="EXPORTIN-1"/>
    <property type="match status" value="1"/>
</dbReference>
<dbReference type="Pfam" id="PF08767">
    <property type="entry name" value="CRM1_C"/>
    <property type="match status" value="1"/>
</dbReference>
<dbReference type="Pfam" id="PF18777">
    <property type="entry name" value="CRM1_repeat"/>
    <property type="match status" value="1"/>
</dbReference>
<dbReference type="Pfam" id="PF18784">
    <property type="entry name" value="CRM1_repeat_2"/>
    <property type="match status" value="1"/>
</dbReference>
<dbReference type="Pfam" id="PF18787">
    <property type="entry name" value="CRM1_repeat_3"/>
    <property type="match status" value="1"/>
</dbReference>
<dbReference type="Pfam" id="PF03810">
    <property type="entry name" value="IBN_N"/>
    <property type="match status" value="1"/>
</dbReference>
<dbReference type="Pfam" id="PF08389">
    <property type="entry name" value="Xpo1"/>
    <property type="match status" value="1"/>
</dbReference>
<dbReference type="SMART" id="SM01102">
    <property type="entry name" value="CRM1_C"/>
    <property type="match status" value="1"/>
</dbReference>
<dbReference type="SMART" id="SM00913">
    <property type="entry name" value="IBN_N"/>
    <property type="match status" value="1"/>
</dbReference>
<dbReference type="SUPFAM" id="SSF48371">
    <property type="entry name" value="ARM repeat"/>
    <property type="match status" value="2"/>
</dbReference>
<dbReference type="PROSITE" id="PS50166">
    <property type="entry name" value="IMPORTIN_B_NT"/>
    <property type="match status" value="1"/>
</dbReference>
<evidence type="ECO:0000250" key="1"/>
<evidence type="ECO:0000255" key="2">
    <source>
        <dbReference type="PROSITE-ProRule" id="PRU00115"/>
    </source>
</evidence>
<evidence type="ECO:0000305" key="3"/>